<organism>
    <name type="scientific">Angiopteris evecta</name>
    <name type="common">Mule's foot fern</name>
    <name type="synonym">Polypodium evectum</name>
    <dbReference type="NCBI Taxonomy" id="13825"/>
    <lineage>
        <taxon>Eukaryota</taxon>
        <taxon>Viridiplantae</taxon>
        <taxon>Streptophyta</taxon>
        <taxon>Embryophyta</taxon>
        <taxon>Tracheophyta</taxon>
        <taxon>Polypodiopsida</taxon>
        <taxon>Marattiidae</taxon>
        <taxon>Marattiales</taxon>
        <taxon>Marattiaceae</taxon>
        <taxon>Angiopteris</taxon>
    </lineage>
</organism>
<dbReference type="EC" id="2.7.7.6" evidence="1"/>
<dbReference type="EMBL" id="DQ821119">
    <property type="protein sequence ID" value="ABG79591.1"/>
    <property type="molecule type" value="Genomic_DNA"/>
</dbReference>
<dbReference type="RefSeq" id="YP_001023692.1">
    <property type="nucleotide sequence ID" value="NC_008829.1"/>
</dbReference>
<dbReference type="SMR" id="A2T324"/>
<dbReference type="GeneID" id="4788203"/>
<dbReference type="GO" id="GO:0009507">
    <property type="term" value="C:chloroplast"/>
    <property type="evidence" value="ECO:0007669"/>
    <property type="project" value="UniProtKB-SubCell"/>
</dbReference>
<dbReference type="GO" id="GO:0000428">
    <property type="term" value="C:DNA-directed RNA polymerase complex"/>
    <property type="evidence" value="ECO:0007669"/>
    <property type="project" value="UniProtKB-KW"/>
</dbReference>
<dbReference type="GO" id="GO:0005739">
    <property type="term" value="C:mitochondrion"/>
    <property type="evidence" value="ECO:0007669"/>
    <property type="project" value="GOC"/>
</dbReference>
<dbReference type="GO" id="GO:0003677">
    <property type="term" value="F:DNA binding"/>
    <property type="evidence" value="ECO:0007669"/>
    <property type="project" value="UniProtKB-UniRule"/>
</dbReference>
<dbReference type="GO" id="GO:0003899">
    <property type="term" value="F:DNA-directed RNA polymerase activity"/>
    <property type="evidence" value="ECO:0007669"/>
    <property type="project" value="UniProtKB-UniRule"/>
</dbReference>
<dbReference type="GO" id="GO:0032549">
    <property type="term" value="F:ribonucleoside binding"/>
    <property type="evidence" value="ECO:0007669"/>
    <property type="project" value="InterPro"/>
</dbReference>
<dbReference type="GO" id="GO:0006351">
    <property type="term" value="P:DNA-templated transcription"/>
    <property type="evidence" value="ECO:0007669"/>
    <property type="project" value="UniProtKB-UniRule"/>
</dbReference>
<dbReference type="CDD" id="cd00653">
    <property type="entry name" value="RNA_pol_B_RPB2"/>
    <property type="match status" value="1"/>
</dbReference>
<dbReference type="Gene3D" id="2.40.50.100">
    <property type="match status" value="1"/>
</dbReference>
<dbReference type="Gene3D" id="2.40.50.150">
    <property type="match status" value="1"/>
</dbReference>
<dbReference type="Gene3D" id="3.90.1100.10">
    <property type="match status" value="1"/>
</dbReference>
<dbReference type="Gene3D" id="2.30.150.10">
    <property type="entry name" value="DNA-directed RNA polymerase, beta subunit, external 1 domain"/>
    <property type="match status" value="1"/>
</dbReference>
<dbReference type="Gene3D" id="2.40.270.10">
    <property type="entry name" value="DNA-directed RNA polymerase, subunit 2, domain 6"/>
    <property type="match status" value="1"/>
</dbReference>
<dbReference type="Gene3D" id="3.90.1800.10">
    <property type="entry name" value="RNA polymerase alpha subunit dimerisation domain"/>
    <property type="match status" value="1"/>
</dbReference>
<dbReference type="Gene3D" id="3.90.1110.10">
    <property type="entry name" value="RNA polymerase Rpb2, domain 2"/>
    <property type="match status" value="1"/>
</dbReference>
<dbReference type="HAMAP" id="MF_01321">
    <property type="entry name" value="RNApol_bact_RpoB"/>
    <property type="match status" value="1"/>
</dbReference>
<dbReference type="InterPro" id="IPR042107">
    <property type="entry name" value="DNA-dir_RNA_pol_bsu_ext_1_sf"/>
</dbReference>
<dbReference type="InterPro" id="IPR015712">
    <property type="entry name" value="DNA-dir_RNA_pol_su2"/>
</dbReference>
<dbReference type="InterPro" id="IPR007120">
    <property type="entry name" value="DNA-dir_RNAP_su2_dom"/>
</dbReference>
<dbReference type="InterPro" id="IPR037033">
    <property type="entry name" value="DNA-dir_RNAP_su2_hyb_sf"/>
</dbReference>
<dbReference type="InterPro" id="IPR010243">
    <property type="entry name" value="RNA_pol_bsu_bac"/>
</dbReference>
<dbReference type="InterPro" id="IPR007121">
    <property type="entry name" value="RNA_pol_bsu_CS"/>
</dbReference>
<dbReference type="InterPro" id="IPR007644">
    <property type="entry name" value="RNA_pol_bsu_protrusion"/>
</dbReference>
<dbReference type="InterPro" id="IPR007642">
    <property type="entry name" value="RNA_pol_Rpb2_2"/>
</dbReference>
<dbReference type="InterPro" id="IPR037034">
    <property type="entry name" value="RNA_pol_Rpb2_2_sf"/>
</dbReference>
<dbReference type="InterPro" id="IPR007645">
    <property type="entry name" value="RNA_pol_Rpb2_3"/>
</dbReference>
<dbReference type="InterPro" id="IPR007641">
    <property type="entry name" value="RNA_pol_Rpb2_7"/>
</dbReference>
<dbReference type="InterPro" id="IPR014724">
    <property type="entry name" value="RNA_pol_RPB2_OB-fold"/>
</dbReference>
<dbReference type="NCBIfam" id="NF001616">
    <property type="entry name" value="PRK00405.1"/>
    <property type="match status" value="1"/>
</dbReference>
<dbReference type="PANTHER" id="PTHR20856">
    <property type="entry name" value="DNA-DIRECTED RNA POLYMERASE I SUBUNIT 2"/>
    <property type="match status" value="1"/>
</dbReference>
<dbReference type="Pfam" id="PF04563">
    <property type="entry name" value="RNA_pol_Rpb2_1"/>
    <property type="match status" value="1"/>
</dbReference>
<dbReference type="Pfam" id="PF04561">
    <property type="entry name" value="RNA_pol_Rpb2_2"/>
    <property type="match status" value="1"/>
</dbReference>
<dbReference type="Pfam" id="PF04565">
    <property type="entry name" value="RNA_pol_Rpb2_3"/>
    <property type="match status" value="1"/>
</dbReference>
<dbReference type="Pfam" id="PF00562">
    <property type="entry name" value="RNA_pol_Rpb2_6"/>
    <property type="match status" value="1"/>
</dbReference>
<dbReference type="Pfam" id="PF04560">
    <property type="entry name" value="RNA_pol_Rpb2_7"/>
    <property type="match status" value="1"/>
</dbReference>
<dbReference type="SUPFAM" id="SSF64484">
    <property type="entry name" value="beta and beta-prime subunits of DNA dependent RNA-polymerase"/>
    <property type="match status" value="1"/>
</dbReference>
<dbReference type="PROSITE" id="PS01166">
    <property type="entry name" value="RNA_POL_BETA"/>
    <property type="match status" value="1"/>
</dbReference>
<geneLocation type="chloroplast"/>
<keyword id="KW-0150">Chloroplast</keyword>
<keyword id="KW-0240">DNA-directed RNA polymerase</keyword>
<keyword id="KW-0548">Nucleotidyltransferase</keyword>
<keyword id="KW-0934">Plastid</keyword>
<keyword id="KW-0804">Transcription</keyword>
<keyword id="KW-0808">Transferase</keyword>
<gene>
    <name evidence="1" type="primary">rpoB</name>
</gene>
<feature type="chain" id="PRO_0000300431" description="DNA-directed RNA polymerase subunit beta">
    <location>
        <begin position="1"/>
        <end position="1070"/>
    </location>
</feature>
<sequence length="1070" mass="121389">MILKENKKMFVLPEFGRIQFEGFQRFIHQDLVEELTNFPKIEDIDQEVEFRLFGERYRLTEPCIKERDAVYQSFTYSSDLYVPAQLMRRRNGRIQRQTVHFGSIPLMNSQGTFVINGIARVVINQILRSPGIYYDSELDHNGNSIYTGTIISDWGGRFKSEIDGKKRIWVRLSKNRKVSIIILLLAMGLNMNDILKNVRYPNIFLRLFQRQAENIQSYEDAIVELYKNLYSAGGNLVFSDSICKELQTKFFQQKFELGQFGRRNLNKKLNLDVPGNEHLLLPQDLLAAVDYLIGVNYGIGTLDDIDDLKNRRVRSVADLLREQLGLALDRLEILIRQTIHTVARRKRLVTPKGLITSAPLTTIFQDFFGSHSLSQFLDQTNPLAELTHKRRLSSLGPGGLTRRTASFQVRDINPSHYGRICPIETSEGMNAGLIASLAIHAKVNDRGSLLSPFYKISKTLGEEHIVYLSSEEDEYYRIATGNTLSLDREIREERATPARYRQEFLTIAWKQIHFRSIFPFQYFSIGTSLIPFLEHNDANRALMGSNMQRQAVPLSQPEKCIVGTGLESQIALDSGSVVVSNQDGQIAYLDGETISILLQNEKTVDIKSIIYERSNNNTCIHQRPVVSQGERLRKGQLLADGTATVGGELALGRNILVAYMPWEGYNFEDAVLISERLIYEDIYTSFHIERYEINIYTTSQGPEKITKEIPHLDSYVLRHLDNNGLVVPGSWVETGDVLVGKLTPQEAENSLRVPEGKLLQAISGIQLANTRESCLKVPIGGRGRVIDVRWIYDEDTLPNIANMVHVYILQKRKIQVGDKVAGRHGNKGIVSKILPRQDMPYLQDGTPVDMILSPLGVPSRMNVGQIFECLLGLAGDILKKHYRITPFDERYEREASRKLVFSELHEASQEAAIPWLFEPDHPGKSRLIDGRTGDIFEQPVTIGKAYMMKLIHQVDDKIHARSSGPYALVTQQPLRGRSRGGGQRVGEMEVWALEGFGVSYILQEMLTIKSDHIPARSKLLGSIVTGKSIPKPNTVPESFRLLVRELRSLAVNSDHNLIFEKDLRKKVKDV</sequence>
<evidence type="ECO:0000255" key="1">
    <source>
        <dbReference type="HAMAP-Rule" id="MF_01321"/>
    </source>
</evidence>
<name>RPOB_ANGEV</name>
<accession>A2T324</accession>
<protein>
    <recommendedName>
        <fullName evidence="1">DNA-directed RNA polymerase subunit beta</fullName>
        <ecNumber evidence="1">2.7.7.6</ecNumber>
    </recommendedName>
    <alternativeName>
        <fullName evidence="1">PEP</fullName>
    </alternativeName>
    <alternativeName>
        <fullName evidence="1">Plastid-encoded RNA polymerase subunit beta</fullName>
        <shortName evidence="1">RNA polymerase subunit beta</shortName>
    </alternativeName>
</protein>
<reference key="1">
    <citation type="journal article" date="2007" name="Am. Fern J.">
        <title>The complete plastid genome sequence of Angiopteris evecta (G. Forst.) Hoffm. (Marattiaceae).</title>
        <authorList>
            <person name="Roper J.M."/>
            <person name="Hansen S.K."/>
            <person name="Wolf P.G."/>
            <person name="Karol K.G."/>
            <person name="Mandoli D.F."/>
            <person name="Everett K.D.E."/>
            <person name="Kuehl J.V."/>
            <person name="Boore J.L."/>
        </authorList>
    </citation>
    <scope>NUCLEOTIDE SEQUENCE [LARGE SCALE GENOMIC DNA]</scope>
</reference>
<comment type="function">
    <text evidence="1">DNA-dependent RNA polymerase catalyzes the transcription of DNA into RNA using the four ribonucleoside triphosphates as substrates.</text>
</comment>
<comment type="catalytic activity">
    <reaction evidence="1">
        <text>RNA(n) + a ribonucleoside 5'-triphosphate = RNA(n+1) + diphosphate</text>
        <dbReference type="Rhea" id="RHEA:21248"/>
        <dbReference type="Rhea" id="RHEA-COMP:14527"/>
        <dbReference type="Rhea" id="RHEA-COMP:17342"/>
        <dbReference type="ChEBI" id="CHEBI:33019"/>
        <dbReference type="ChEBI" id="CHEBI:61557"/>
        <dbReference type="ChEBI" id="CHEBI:140395"/>
        <dbReference type="EC" id="2.7.7.6"/>
    </reaction>
</comment>
<comment type="subunit">
    <text evidence="1">In plastids the minimal PEP RNA polymerase catalytic core is composed of four subunits: alpha, beta, beta', and beta''. When a (nuclear-encoded) sigma factor is associated with the core the holoenzyme is formed, which can initiate transcription.</text>
</comment>
<comment type="subcellular location">
    <subcellularLocation>
        <location>Plastid</location>
        <location>Chloroplast</location>
    </subcellularLocation>
</comment>
<comment type="similarity">
    <text evidence="1">Belongs to the RNA polymerase beta chain family.</text>
</comment>
<proteinExistence type="inferred from homology"/>